<gene>
    <name evidence="1" type="primary">atpG</name>
    <name type="ordered locus">MGAS10270_Spy0635</name>
</gene>
<reference key="1">
    <citation type="journal article" date="2006" name="Proc. Natl. Acad. Sci. U.S.A.">
        <title>Molecular genetic anatomy of inter- and intraserotype variation in the human bacterial pathogen group A Streptococcus.</title>
        <authorList>
            <person name="Beres S.B."/>
            <person name="Richter E.W."/>
            <person name="Nagiec M.J."/>
            <person name="Sumby P."/>
            <person name="Porcella S.F."/>
            <person name="DeLeo F.R."/>
            <person name="Musser J.M."/>
        </authorList>
    </citation>
    <scope>NUCLEOTIDE SEQUENCE [LARGE SCALE GENOMIC DNA]</scope>
    <source>
        <strain>MGAS10270</strain>
    </source>
</reference>
<feature type="chain" id="PRO_1000053351" description="ATP synthase gamma chain">
    <location>
        <begin position="1"/>
        <end position="291"/>
    </location>
</feature>
<name>ATPG_STRPD</name>
<proteinExistence type="inferred from homology"/>
<protein>
    <recommendedName>
        <fullName evidence="1">ATP synthase gamma chain</fullName>
    </recommendedName>
    <alternativeName>
        <fullName evidence="1">ATP synthase F1 sector gamma subunit</fullName>
    </alternativeName>
    <alternativeName>
        <fullName evidence="1">F-ATPase gamma subunit</fullName>
    </alternativeName>
</protein>
<sequence>MAGSLSEIKAKIISTEKTSKITSAMRMVSSAKLVKSEQAARDFQIYASKIRQITTDLLKSELTIGSDNPMLVSRPVKKTGYIVITSDKGLVGGYNSKILKSVMDMITEYHADGDYEIISIGSVGSDFFKARGMNVAFELRGLADQPSFEQVRQIISQSVDMFVNEIFDELYVCYNHHVNSLTSQVRVQQMLPISDLVADEAAEEGVTGFELEPNRHDILDQLLPQFTESLIYGAIIDAKTAEHAAGMTAMQTATDNAKNVINDLTIQYNRARQAAITQEITEIVAGANALE</sequence>
<evidence type="ECO:0000255" key="1">
    <source>
        <dbReference type="HAMAP-Rule" id="MF_00815"/>
    </source>
</evidence>
<keyword id="KW-0066">ATP synthesis</keyword>
<keyword id="KW-1003">Cell membrane</keyword>
<keyword id="KW-0139">CF(1)</keyword>
<keyword id="KW-0375">Hydrogen ion transport</keyword>
<keyword id="KW-0406">Ion transport</keyword>
<keyword id="KW-0472">Membrane</keyword>
<keyword id="KW-0813">Transport</keyword>
<organism>
    <name type="scientific">Streptococcus pyogenes serotype M2 (strain MGAS10270)</name>
    <dbReference type="NCBI Taxonomy" id="370552"/>
    <lineage>
        <taxon>Bacteria</taxon>
        <taxon>Bacillati</taxon>
        <taxon>Bacillota</taxon>
        <taxon>Bacilli</taxon>
        <taxon>Lactobacillales</taxon>
        <taxon>Streptococcaceae</taxon>
        <taxon>Streptococcus</taxon>
    </lineage>
</organism>
<comment type="function">
    <text evidence="1">Produces ATP from ADP in the presence of a proton gradient across the membrane. The gamma chain is believed to be important in regulating ATPase activity and the flow of protons through the CF(0) complex.</text>
</comment>
<comment type="subunit">
    <text evidence="1">F-type ATPases have 2 components, CF(1) - the catalytic core - and CF(0) - the membrane proton channel. CF(1) has five subunits: alpha(3), beta(3), gamma(1), delta(1), epsilon(1). CF(0) has three main subunits: a, b and c.</text>
</comment>
<comment type="subcellular location">
    <subcellularLocation>
        <location evidence="1">Cell membrane</location>
        <topology evidence="1">Peripheral membrane protein</topology>
    </subcellularLocation>
</comment>
<comment type="similarity">
    <text evidence="1">Belongs to the ATPase gamma chain family.</text>
</comment>
<dbReference type="EMBL" id="CP000260">
    <property type="protein sequence ID" value="ABF33700.1"/>
    <property type="molecule type" value="Genomic_DNA"/>
</dbReference>
<dbReference type="RefSeq" id="WP_002985236.1">
    <property type="nucleotide sequence ID" value="NZ_CVUH01000002.1"/>
</dbReference>
<dbReference type="SMR" id="Q1JHN6"/>
<dbReference type="KEGG" id="sph:MGAS10270_Spy0635"/>
<dbReference type="HOGENOM" id="CLU_050669_0_1_9"/>
<dbReference type="Proteomes" id="UP000002436">
    <property type="component" value="Chromosome"/>
</dbReference>
<dbReference type="GO" id="GO:0005886">
    <property type="term" value="C:plasma membrane"/>
    <property type="evidence" value="ECO:0007669"/>
    <property type="project" value="UniProtKB-SubCell"/>
</dbReference>
<dbReference type="GO" id="GO:0045259">
    <property type="term" value="C:proton-transporting ATP synthase complex"/>
    <property type="evidence" value="ECO:0007669"/>
    <property type="project" value="UniProtKB-KW"/>
</dbReference>
<dbReference type="GO" id="GO:0005524">
    <property type="term" value="F:ATP binding"/>
    <property type="evidence" value="ECO:0007669"/>
    <property type="project" value="UniProtKB-UniRule"/>
</dbReference>
<dbReference type="GO" id="GO:0046933">
    <property type="term" value="F:proton-transporting ATP synthase activity, rotational mechanism"/>
    <property type="evidence" value="ECO:0007669"/>
    <property type="project" value="UniProtKB-UniRule"/>
</dbReference>
<dbReference type="GO" id="GO:0042777">
    <property type="term" value="P:proton motive force-driven plasma membrane ATP synthesis"/>
    <property type="evidence" value="ECO:0007669"/>
    <property type="project" value="UniProtKB-UniRule"/>
</dbReference>
<dbReference type="CDD" id="cd12151">
    <property type="entry name" value="F1-ATPase_gamma"/>
    <property type="match status" value="1"/>
</dbReference>
<dbReference type="FunFam" id="3.40.1380.10:FF:000002">
    <property type="entry name" value="ATP synthase gamma chain"/>
    <property type="match status" value="1"/>
</dbReference>
<dbReference type="Gene3D" id="3.40.1380.10">
    <property type="match status" value="1"/>
</dbReference>
<dbReference type="Gene3D" id="1.10.287.80">
    <property type="entry name" value="ATP synthase, gamma subunit, helix hairpin domain"/>
    <property type="match status" value="1"/>
</dbReference>
<dbReference type="HAMAP" id="MF_00815">
    <property type="entry name" value="ATP_synth_gamma_bact"/>
    <property type="match status" value="1"/>
</dbReference>
<dbReference type="InterPro" id="IPR035968">
    <property type="entry name" value="ATP_synth_F1_ATPase_gsu"/>
</dbReference>
<dbReference type="InterPro" id="IPR000131">
    <property type="entry name" value="ATP_synth_F1_gsu"/>
</dbReference>
<dbReference type="InterPro" id="IPR023632">
    <property type="entry name" value="ATP_synth_F1_gsu_CS"/>
</dbReference>
<dbReference type="NCBIfam" id="TIGR01146">
    <property type="entry name" value="ATPsyn_F1gamma"/>
    <property type="match status" value="1"/>
</dbReference>
<dbReference type="NCBIfam" id="NF004147">
    <property type="entry name" value="PRK05621.2-1"/>
    <property type="match status" value="1"/>
</dbReference>
<dbReference type="PANTHER" id="PTHR11693">
    <property type="entry name" value="ATP SYNTHASE GAMMA CHAIN"/>
    <property type="match status" value="1"/>
</dbReference>
<dbReference type="PANTHER" id="PTHR11693:SF22">
    <property type="entry name" value="ATP SYNTHASE SUBUNIT GAMMA, MITOCHONDRIAL"/>
    <property type="match status" value="1"/>
</dbReference>
<dbReference type="Pfam" id="PF00231">
    <property type="entry name" value="ATP-synt"/>
    <property type="match status" value="1"/>
</dbReference>
<dbReference type="PRINTS" id="PR00126">
    <property type="entry name" value="ATPASEGAMMA"/>
</dbReference>
<dbReference type="SUPFAM" id="SSF52943">
    <property type="entry name" value="ATP synthase (F1-ATPase), gamma subunit"/>
    <property type="match status" value="1"/>
</dbReference>
<dbReference type="PROSITE" id="PS00153">
    <property type="entry name" value="ATPASE_GAMMA"/>
    <property type="match status" value="1"/>
</dbReference>
<accession>Q1JHN6</accession>